<feature type="chain" id="PRO_0000431550" description="Protein QUA-QUINE STARCH">
    <location>
        <begin position="1"/>
        <end position="59"/>
    </location>
</feature>
<dbReference type="EMBL" id="EU805808">
    <property type="protein sequence ID" value="ACE80938.1"/>
    <property type="molecule type" value="Genomic_DNA"/>
</dbReference>
<dbReference type="EMBL" id="AP000732">
    <property type="status" value="NOT_ANNOTATED_CDS"/>
    <property type="molecule type" value="Genomic_DNA"/>
</dbReference>
<dbReference type="EMBL" id="CP002686">
    <property type="protein sequence ID" value="AEE77653.1"/>
    <property type="molecule type" value="Genomic_DNA"/>
</dbReference>
<dbReference type="RefSeq" id="NP_189695.1">
    <property type="nucleotide sequence ID" value="NM_113975.5"/>
</dbReference>
<dbReference type="STRING" id="3702.Q3E7K4"/>
<dbReference type="PaxDb" id="3702-AT3G30720.1"/>
<dbReference type="EnsemblPlants" id="AT3G30720.1">
    <property type="protein sequence ID" value="AT3G30720.1"/>
    <property type="gene ID" value="AT3G30720"/>
</dbReference>
<dbReference type="GeneID" id="822807"/>
<dbReference type="Gramene" id="AT3G30720.1">
    <property type="protein sequence ID" value="AT3G30720.1"/>
    <property type="gene ID" value="AT3G30720"/>
</dbReference>
<dbReference type="KEGG" id="ath:AT3G30720"/>
<dbReference type="Araport" id="AT3G30720"/>
<dbReference type="TAIR" id="AT3G30720">
    <property type="gene designation" value="QQS"/>
</dbReference>
<dbReference type="HOGENOM" id="CLU_2963998_0_0_1"/>
<dbReference type="InParanoid" id="Q3E7K4"/>
<dbReference type="OrthoDB" id="10270853at2759"/>
<dbReference type="PRO" id="PR:Q3E7K4"/>
<dbReference type="Proteomes" id="UP000006548">
    <property type="component" value="Chromosome 3"/>
</dbReference>
<dbReference type="ExpressionAtlas" id="Q3E7K4">
    <property type="expression patterns" value="baseline and differential"/>
</dbReference>
<dbReference type="GO" id="GO:0005829">
    <property type="term" value="C:cytosol"/>
    <property type="evidence" value="ECO:0000314"/>
    <property type="project" value="TAIR"/>
</dbReference>
<dbReference type="GO" id="GO:0005634">
    <property type="term" value="C:nucleus"/>
    <property type="evidence" value="ECO:0000353"/>
    <property type="project" value="TAIR"/>
</dbReference>
<dbReference type="GO" id="GO:0045087">
    <property type="term" value="P:innate immune response"/>
    <property type="evidence" value="ECO:0000315"/>
    <property type="project" value="TAIR"/>
</dbReference>
<dbReference type="GO" id="GO:2000905">
    <property type="term" value="P:negative regulation of starch metabolic process"/>
    <property type="evidence" value="ECO:0000315"/>
    <property type="project" value="TAIR"/>
</dbReference>
<dbReference type="GO" id="GO:0051247">
    <property type="term" value="P:positive regulation of protein metabolic process"/>
    <property type="evidence" value="ECO:0000315"/>
    <property type="project" value="TAIR"/>
</dbReference>
<dbReference type="GO" id="GO:0019252">
    <property type="term" value="P:starch biosynthetic process"/>
    <property type="evidence" value="ECO:0000315"/>
    <property type="project" value="TAIR"/>
</dbReference>
<accession>Q3E7K4</accession>
<keyword id="KW-0963">Cytoplasm</keyword>
<keyword id="KW-1185">Reference proteome</keyword>
<keyword id="KW-0750">Starch biosynthesis</keyword>
<sequence length="59" mass="7052">MKTNREQEIYVERSFKPNNSTIQNLMDIERFILPHTSTSGVARLKMRVISWVGLQFYNY</sequence>
<comment type="function">
    <text evidence="4 7">Involved in regulating carbon and nitrogen allocation to starch and protein (PubMed:25146936).</text>
</comment>
<comment type="subcellular location">
    <subcellularLocation>
        <location evidence="1">Cytoplasm</location>
    </subcellularLocation>
</comment>
<comment type="tissue specificity">
    <text evidence="1">Expressed in hypocotyls, leaves, vasculature, hydathodes, trichomes, pedicels, sepals, filaments, mature pollen, stigma papillae, styles, siliques, root and shoot tips, but not in shoot meristem, petals or root epidermis.</text>
</comment>
<comment type="induction">
    <text evidence="1 2 3 4">Down-regulated by cold (PubMed:25146936). Up-regulated by treatment with 5-aza-2'-deoxycytidine (PubMed:23593031). Up-regulated during the dark phase of the diurnal cycle (PubMed:19154206). Regulated by the transcription factor WRKY46 and up-regulated by light (PubMed:24773321).</text>
</comment>
<comment type="disruption phenotype">
    <text evidence="4 5">No visible phenotype, but increased leaf starch content and decreased protein content (PubMed:25146936). Increased accumulation of SAQR (PubMed:27462324).</text>
</comment>
<comment type="miscellaneous">
    <text evidence="2">The expression of QQS varies considerably among natural accessions as well as within populations directly sampled from the wild. This variation correlates negatively with the DNA methylation level of repeated sequences located within the 5'end of the gene.</text>
</comment>
<organism evidence="9">
    <name type="scientific">Arabidopsis thaliana</name>
    <name type="common">Mouse-ear cress</name>
    <dbReference type="NCBI Taxonomy" id="3702"/>
    <lineage>
        <taxon>Eukaryota</taxon>
        <taxon>Viridiplantae</taxon>
        <taxon>Streptophyta</taxon>
        <taxon>Embryophyta</taxon>
        <taxon>Tracheophyta</taxon>
        <taxon>Spermatophyta</taxon>
        <taxon>Magnoliopsida</taxon>
        <taxon>eudicotyledons</taxon>
        <taxon>Gunneridae</taxon>
        <taxon>Pentapetalae</taxon>
        <taxon>rosids</taxon>
        <taxon>malvids</taxon>
        <taxon>Brassicales</taxon>
        <taxon>Brassicaceae</taxon>
        <taxon>Camelineae</taxon>
        <taxon>Arabidopsis</taxon>
    </lineage>
</organism>
<name>QQS_ARATH</name>
<proteinExistence type="evidence at transcript level"/>
<reference key="1">
    <citation type="journal article" date="2009" name="Plant J.">
        <title>Identification of the novel protein QQS as a component of the starch metabolic network in Arabidopsis leaves.</title>
        <authorList>
            <person name="Li L."/>
            <person name="Foster C.M."/>
            <person name="Gan Q."/>
            <person name="Nettleton D."/>
            <person name="James M.G."/>
            <person name="Myers A.M."/>
            <person name="Wurtele E.S."/>
        </authorList>
    </citation>
    <scope>NUCLEOTIDE SEQUENCE [GENOMIC DNA]</scope>
    <scope>FUNCTION</scope>
    <scope>INDUCTION</scope>
    <scope>TISSUE SPECIFICITY</scope>
    <scope>SUBCELLULAR LOCATION</scope>
    <source>
        <strain>cv. Columbia</strain>
    </source>
</reference>
<reference key="2">
    <citation type="journal article" date="2000" name="DNA Res.">
        <title>Structural analysis of Arabidopsis thaliana chromosome 3. II. Sequence features of the 4,251,695 bp regions covered by 90 P1, TAC and BAC clones.</title>
        <authorList>
            <person name="Kaneko T."/>
            <person name="Katoh T."/>
            <person name="Sato S."/>
            <person name="Nakamura Y."/>
            <person name="Asamizu E."/>
            <person name="Tabata S."/>
        </authorList>
    </citation>
    <scope>NUCLEOTIDE SEQUENCE [LARGE SCALE GENOMIC DNA]</scope>
    <source>
        <strain>cv. Columbia</strain>
    </source>
</reference>
<reference key="3">
    <citation type="journal article" date="2017" name="Plant J.">
        <title>Araport11: a complete reannotation of the Arabidopsis thaliana reference genome.</title>
        <authorList>
            <person name="Cheng C.Y."/>
            <person name="Krishnakumar V."/>
            <person name="Chan A.P."/>
            <person name="Thibaud-Nissen F."/>
            <person name="Schobel S."/>
            <person name="Town C.D."/>
        </authorList>
    </citation>
    <scope>GENOME REANNOTATION</scope>
    <source>
        <strain>cv. Columbia</strain>
    </source>
</reference>
<reference key="4">
    <citation type="journal article" date="2013" name="PLoS Genet.">
        <title>Extensive natural epigenetic variation at a de novo originated gene.</title>
        <authorList>
            <person name="Silveira A.B."/>
            <person name="Trontin C."/>
            <person name="Cortijo S."/>
            <person name="Barau J."/>
            <person name="Del Bem L.E."/>
            <person name="Loudet O."/>
            <person name="Colot V."/>
            <person name="Vincentz M."/>
        </authorList>
    </citation>
    <scope>INDUCTION</scope>
    <scope>MISCELLANEOUS</scope>
    <source>
        <strain>cv. Columbia</strain>
    </source>
</reference>
<reference key="5">
    <citation type="journal article" date="2014" name="Plant J.">
        <title>Transcription factor WRKY46 regulates osmotic stress responses and stomatal movement independently in Arabidopsis.</title>
        <authorList>
            <person name="Ding Z.J."/>
            <person name="Yan J.Y."/>
            <person name="Xu X.Y."/>
            <person name="Yu D.Q."/>
            <person name="Li G.X."/>
            <person name="Zhang S.Q."/>
            <person name="Zheng S.J."/>
        </authorList>
    </citation>
    <scope>INDUCTION BY LIGHT AND WRKY46</scope>
</reference>
<reference key="6">
    <citation type="journal article" date="2015" name="Plant Biotechnol. J.">
        <title>The QQS orphan gene of Arabidopsis modulates carbon and nitrogen allocation in soybean.</title>
        <authorList>
            <person name="Li L."/>
            <person name="Wurtele E.S."/>
        </authorList>
    </citation>
    <scope>FUNCTION</scope>
    <scope>DISRUPTION PHENOTYPE</scope>
    <scope>INDUCTION BY COLD</scope>
    <source>
        <strain>cv. Columbia</strain>
    </source>
</reference>
<reference key="7">
    <citation type="journal article" date="2016" name="Front. Plant Sci.">
        <title>A clade-specific Arabidopsis gene connects primary metabolism and senescence.</title>
        <authorList>
            <person name="Jones D.C."/>
            <person name="Zheng W."/>
            <person name="Huang S."/>
            <person name="Du C."/>
            <person name="Zhao X."/>
            <person name="Yennamalli R.M."/>
            <person name="Sen T.Z."/>
            <person name="Nettleton D."/>
            <person name="Wurtele E.S."/>
            <person name="Li L."/>
        </authorList>
    </citation>
    <scope>DISRUPTION PHENOTYPE</scope>
    <source>
        <strain>cv. Columbia</strain>
    </source>
</reference>
<evidence type="ECO:0000269" key="1">
    <source>
    </source>
</evidence>
<evidence type="ECO:0000269" key="2">
    <source>
    </source>
</evidence>
<evidence type="ECO:0000269" key="3">
    <source>
    </source>
</evidence>
<evidence type="ECO:0000269" key="4">
    <source>
    </source>
</evidence>
<evidence type="ECO:0000269" key="5">
    <source>
    </source>
</evidence>
<evidence type="ECO:0000303" key="6">
    <source>
    </source>
</evidence>
<evidence type="ECO:0000305" key="7">
    <source>
    </source>
</evidence>
<evidence type="ECO:0000312" key="8">
    <source>
        <dbReference type="Araport" id="AT3G30720"/>
    </source>
</evidence>
<evidence type="ECO:0000312" key="9">
    <source>
        <dbReference type="EMBL" id="ACE80938.1"/>
    </source>
</evidence>
<evidence type="ECO:0000312" key="10">
    <source>
        <dbReference type="EMBL" id="AP000732"/>
    </source>
</evidence>
<protein>
    <recommendedName>
        <fullName evidence="6">Protein QUA-QUINE STARCH</fullName>
    </recommendedName>
</protein>
<gene>
    <name evidence="6" type="primary">QQS</name>
    <name evidence="8" type="ordered locus">At3g30720</name>
    <name evidence="10" type="ORF">F21A17</name>
</gene>